<name>SYV_SOLUE</name>
<dbReference type="EC" id="6.1.1.9" evidence="1"/>
<dbReference type="EMBL" id="CP000473">
    <property type="protein sequence ID" value="ABJ88469.1"/>
    <property type="molecule type" value="Genomic_DNA"/>
</dbReference>
<dbReference type="SMR" id="Q01PF1"/>
<dbReference type="FunCoup" id="Q01PF1">
    <property type="interactions" value="604"/>
</dbReference>
<dbReference type="STRING" id="234267.Acid_7561"/>
<dbReference type="KEGG" id="sus:Acid_7561"/>
<dbReference type="eggNOG" id="COG0525">
    <property type="taxonomic scope" value="Bacteria"/>
</dbReference>
<dbReference type="HOGENOM" id="CLU_001493_0_2_0"/>
<dbReference type="InParanoid" id="Q01PF1"/>
<dbReference type="OrthoDB" id="9810365at2"/>
<dbReference type="GO" id="GO:0005829">
    <property type="term" value="C:cytosol"/>
    <property type="evidence" value="ECO:0007669"/>
    <property type="project" value="TreeGrafter"/>
</dbReference>
<dbReference type="GO" id="GO:0002161">
    <property type="term" value="F:aminoacyl-tRNA deacylase activity"/>
    <property type="evidence" value="ECO:0007669"/>
    <property type="project" value="InterPro"/>
</dbReference>
<dbReference type="GO" id="GO:0005524">
    <property type="term" value="F:ATP binding"/>
    <property type="evidence" value="ECO:0007669"/>
    <property type="project" value="UniProtKB-UniRule"/>
</dbReference>
<dbReference type="GO" id="GO:0004832">
    <property type="term" value="F:valine-tRNA ligase activity"/>
    <property type="evidence" value="ECO:0007669"/>
    <property type="project" value="UniProtKB-UniRule"/>
</dbReference>
<dbReference type="GO" id="GO:0006438">
    <property type="term" value="P:valyl-tRNA aminoacylation"/>
    <property type="evidence" value="ECO:0007669"/>
    <property type="project" value="UniProtKB-UniRule"/>
</dbReference>
<dbReference type="CDD" id="cd07962">
    <property type="entry name" value="Anticodon_Ia_Val"/>
    <property type="match status" value="1"/>
</dbReference>
<dbReference type="CDD" id="cd00817">
    <property type="entry name" value="ValRS_core"/>
    <property type="match status" value="1"/>
</dbReference>
<dbReference type="FunFam" id="3.40.50.620:FF:000032">
    <property type="entry name" value="Valine--tRNA ligase"/>
    <property type="match status" value="1"/>
</dbReference>
<dbReference type="FunFam" id="3.40.50.620:FF:000098">
    <property type="entry name" value="Valine--tRNA ligase"/>
    <property type="match status" value="1"/>
</dbReference>
<dbReference type="FunFam" id="3.90.740.10:FF:000005">
    <property type="entry name" value="Valine--tRNA ligase, mitochondrial"/>
    <property type="match status" value="1"/>
</dbReference>
<dbReference type="Gene3D" id="3.40.50.620">
    <property type="entry name" value="HUPs"/>
    <property type="match status" value="3"/>
</dbReference>
<dbReference type="Gene3D" id="1.10.730.10">
    <property type="entry name" value="Isoleucyl-tRNA Synthetase, Domain 1"/>
    <property type="match status" value="1"/>
</dbReference>
<dbReference type="Gene3D" id="1.10.287.380">
    <property type="entry name" value="Valyl-tRNA synthetase, C-terminal domain"/>
    <property type="match status" value="1"/>
</dbReference>
<dbReference type="Gene3D" id="3.90.740.10">
    <property type="entry name" value="Valyl/Leucyl/Isoleucyl-tRNA synthetase, editing domain"/>
    <property type="match status" value="1"/>
</dbReference>
<dbReference type="HAMAP" id="MF_02004">
    <property type="entry name" value="Val_tRNA_synth_type1"/>
    <property type="match status" value="1"/>
</dbReference>
<dbReference type="InterPro" id="IPR001412">
    <property type="entry name" value="aa-tRNA-synth_I_CS"/>
</dbReference>
<dbReference type="InterPro" id="IPR002300">
    <property type="entry name" value="aa-tRNA-synth_Ia"/>
</dbReference>
<dbReference type="InterPro" id="IPR033705">
    <property type="entry name" value="Anticodon_Ia_Val"/>
</dbReference>
<dbReference type="InterPro" id="IPR013155">
    <property type="entry name" value="M/V/L/I-tRNA-synth_anticd-bd"/>
</dbReference>
<dbReference type="InterPro" id="IPR014729">
    <property type="entry name" value="Rossmann-like_a/b/a_fold"/>
</dbReference>
<dbReference type="InterPro" id="IPR010978">
    <property type="entry name" value="tRNA-bd_arm"/>
</dbReference>
<dbReference type="InterPro" id="IPR009080">
    <property type="entry name" value="tRNAsynth_Ia_anticodon-bd"/>
</dbReference>
<dbReference type="InterPro" id="IPR037118">
    <property type="entry name" value="Val-tRNA_synth_C_sf"/>
</dbReference>
<dbReference type="InterPro" id="IPR019499">
    <property type="entry name" value="Val-tRNA_synth_tRNA-bd"/>
</dbReference>
<dbReference type="InterPro" id="IPR009008">
    <property type="entry name" value="Val/Leu/Ile-tRNA-synth_edit"/>
</dbReference>
<dbReference type="InterPro" id="IPR002303">
    <property type="entry name" value="Valyl-tRNA_ligase"/>
</dbReference>
<dbReference type="NCBIfam" id="NF004349">
    <property type="entry name" value="PRK05729.1"/>
    <property type="match status" value="1"/>
</dbReference>
<dbReference type="NCBIfam" id="TIGR00422">
    <property type="entry name" value="valS"/>
    <property type="match status" value="1"/>
</dbReference>
<dbReference type="PANTHER" id="PTHR11946:SF93">
    <property type="entry name" value="VALINE--TRNA LIGASE, CHLOROPLASTIC_MITOCHONDRIAL 2"/>
    <property type="match status" value="1"/>
</dbReference>
<dbReference type="PANTHER" id="PTHR11946">
    <property type="entry name" value="VALYL-TRNA SYNTHETASES"/>
    <property type="match status" value="1"/>
</dbReference>
<dbReference type="Pfam" id="PF08264">
    <property type="entry name" value="Anticodon_1"/>
    <property type="match status" value="1"/>
</dbReference>
<dbReference type="Pfam" id="PF00133">
    <property type="entry name" value="tRNA-synt_1"/>
    <property type="match status" value="1"/>
</dbReference>
<dbReference type="Pfam" id="PF10458">
    <property type="entry name" value="Val_tRNA-synt_C"/>
    <property type="match status" value="1"/>
</dbReference>
<dbReference type="PRINTS" id="PR00986">
    <property type="entry name" value="TRNASYNTHVAL"/>
</dbReference>
<dbReference type="SUPFAM" id="SSF47323">
    <property type="entry name" value="Anticodon-binding domain of a subclass of class I aminoacyl-tRNA synthetases"/>
    <property type="match status" value="1"/>
</dbReference>
<dbReference type="SUPFAM" id="SSF52374">
    <property type="entry name" value="Nucleotidylyl transferase"/>
    <property type="match status" value="1"/>
</dbReference>
<dbReference type="SUPFAM" id="SSF46589">
    <property type="entry name" value="tRNA-binding arm"/>
    <property type="match status" value="1"/>
</dbReference>
<dbReference type="SUPFAM" id="SSF50677">
    <property type="entry name" value="ValRS/IleRS/LeuRS editing domain"/>
    <property type="match status" value="1"/>
</dbReference>
<dbReference type="PROSITE" id="PS00178">
    <property type="entry name" value="AA_TRNA_LIGASE_I"/>
    <property type="match status" value="1"/>
</dbReference>
<accession>Q01PF1</accession>
<evidence type="ECO:0000255" key="1">
    <source>
        <dbReference type="HAMAP-Rule" id="MF_02004"/>
    </source>
</evidence>
<protein>
    <recommendedName>
        <fullName evidence="1">Valine--tRNA ligase</fullName>
        <ecNumber evidence="1">6.1.1.9</ecNumber>
    </recommendedName>
    <alternativeName>
        <fullName evidence="1">Valyl-tRNA synthetase</fullName>
        <shortName evidence="1">ValRS</shortName>
    </alternativeName>
</protein>
<feature type="chain" id="PRO_1000022173" description="Valine--tRNA ligase">
    <location>
        <begin position="1"/>
        <end position="855"/>
    </location>
</feature>
<feature type="coiled-coil region" evidence="1">
    <location>
        <begin position="797"/>
        <end position="827"/>
    </location>
</feature>
<feature type="short sequence motif" description="'HIGH' region">
    <location>
        <begin position="44"/>
        <end position="54"/>
    </location>
</feature>
<feature type="short sequence motif" description="'KMSKS' region">
    <location>
        <begin position="524"/>
        <end position="528"/>
    </location>
</feature>
<feature type="binding site" evidence="1">
    <location>
        <position position="527"/>
    </location>
    <ligand>
        <name>ATP</name>
        <dbReference type="ChEBI" id="CHEBI:30616"/>
    </ligand>
</feature>
<gene>
    <name evidence="1" type="primary">valS</name>
    <name type="ordered locus">Acid_7561</name>
</gene>
<comment type="function">
    <text evidence="1">Catalyzes the attachment of valine to tRNA(Val). As ValRS can inadvertently accommodate and process structurally similar amino acids such as threonine, to avoid such errors, it has a 'posttransfer' editing activity that hydrolyzes mischarged Thr-tRNA(Val) in a tRNA-dependent manner.</text>
</comment>
<comment type="catalytic activity">
    <reaction evidence="1">
        <text>tRNA(Val) + L-valine + ATP = L-valyl-tRNA(Val) + AMP + diphosphate</text>
        <dbReference type="Rhea" id="RHEA:10704"/>
        <dbReference type="Rhea" id="RHEA-COMP:9672"/>
        <dbReference type="Rhea" id="RHEA-COMP:9708"/>
        <dbReference type="ChEBI" id="CHEBI:30616"/>
        <dbReference type="ChEBI" id="CHEBI:33019"/>
        <dbReference type="ChEBI" id="CHEBI:57762"/>
        <dbReference type="ChEBI" id="CHEBI:78442"/>
        <dbReference type="ChEBI" id="CHEBI:78537"/>
        <dbReference type="ChEBI" id="CHEBI:456215"/>
        <dbReference type="EC" id="6.1.1.9"/>
    </reaction>
</comment>
<comment type="subunit">
    <text evidence="1">Monomer.</text>
</comment>
<comment type="subcellular location">
    <subcellularLocation>
        <location evidence="1">Cytoplasm</location>
    </subcellularLocation>
</comment>
<comment type="domain">
    <text evidence="1">ValRS has two distinct active sites: one for aminoacylation and one for editing. The misactivated threonine is translocated from the active site to the editing site.</text>
</comment>
<comment type="domain">
    <text evidence="1">The C-terminal coiled-coil domain is crucial for aminoacylation activity.</text>
</comment>
<comment type="similarity">
    <text evidence="1">Belongs to the class-I aminoacyl-tRNA synthetase family. ValS type 1 subfamily.</text>
</comment>
<reference key="1">
    <citation type="journal article" date="2009" name="Appl. Environ. Microbiol.">
        <title>Three genomes from the phylum Acidobacteria provide insight into the lifestyles of these microorganisms in soils.</title>
        <authorList>
            <person name="Ward N.L."/>
            <person name="Challacombe J.F."/>
            <person name="Janssen P.H."/>
            <person name="Henrissat B."/>
            <person name="Coutinho P.M."/>
            <person name="Wu M."/>
            <person name="Xie G."/>
            <person name="Haft D.H."/>
            <person name="Sait M."/>
            <person name="Badger J."/>
            <person name="Barabote R.D."/>
            <person name="Bradley B."/>
            <person name="Brettin T.S."/>
            <person name="Brinkac L.M."/>
            <person name="Bruce D."/>
            <person name="Creasy T."/>
            <person name="Daugherty S.C."/>
            <person name="Davidsen T.M."/>
            <person name="DeBoy R.T."/>
            <person name="Detter J.C."/>
            <person name="Dodson R.J."/>
            <person name="Durkin A.S."/>
            <person name="Ganapathy A."/>
            <person name="Gwinn-Giglio M."/>
            <person name="Han C.S."/>
            <person name="Khouri H."/>
            <person name="Kiss H."/>
            <person name="Kothari S.P."/>
            <person name="Madupu R."/>
            <person name="Nelson K.E."/>
            <person name="Nelson W.C."/>
            <person name="Paulsen I."/>
            <person name="Penn K."/>
            <person name="Ren Q."/>
            <person name="Rosovitz M.J."/>
            <person name="Selengut J.D."/>
            <person name="Shrivastava S."/>
            <person name="Sullivan S.A."/>
            <person name="Tapia R."/>
            <person name="Thompson L.S."/>
            <person name="Watkins K.L."/>
            <person name="Yang Q."/>
            <person name="Yu C."/>
            <person name="Zafar N."/>
            <person name="Zhou L."/>
            <person name="Kuske C.R."/>
        </authorList>
    </citation>
    <scope>NUCLEOTIDE SEQUENCE [LARGE SCALE GENOMIC DNA]</scope>
    <source>
        <strain>Ellin6076</strain>
    </source>
</reference>
<organism>
    <name type="scientific">Solibacter usitatus (strain Ellin6076)</name>
    <dbReference type="NCBI Taxonomy" id="234267"/>
    <lineage>
        <taxon>Bacteria</taxon>
        <taxon>Pseudomonadati</taxon>
        <taxon>Acidobacteriota</taxon>
        <taxon>Terriglobia</taxon>
        <taxon>Bryobacterales</taxon>
        <taxon>Solibacteraceae</taxon>
        <taxon>Candidatus Solibacter</taxon>
    </lineage>
</organism>
<sequence>MQIEKVYEPQRFEPHWAQWWIDSNIFRANPESPGRVFSLVIPPPNVTGVLHIGHMLEHTEIDVSTRWHRMLGDNTLWLPGTDHAGIATQMVVARQLKEEGINYRDLGREKFEERVWQWKAQSGDTIKRQMVRLGASCDWSRERFTLDPGLSRAVREVFVSLYERGLLYRGEYMTNWCPSCNTAISDLEVAHADVAGHLWHIRYPVNGMPGRFVTVATTRPETMLGDTAIAVNAKDPRYQDLHGKTVQLPLMDREIPIILDDLADPQFGTGVVKVTPAHDPNDFEAGKRHNLAKIQVIDNNARMTAAAGPYAGLDRFDARKRVVSALEEIGALVKVEDYPLSLGKCDRCKTPVEPLISTQWFVKTKPLAEKAIAVVESGEIGFVPQNWTKTYYEWMYNIRDWCVSRQLWWGHRIPAWHCGECKEIIVAREAPKACPRCASENLTQDTDVLDTWFSSGLWPFSTLGWPDQTADLAKYYPTTLLITGFDILFFWVARMVMFGLEFMGEVPFKQVYIHGLVRDADRQKMSKTKGNVIDPLVVTEKYGTDAVRMALLQGAAPGTDIVLTEERMESSRAFANKIWNAARFLFMNADQSAAAPAEPTIEDRWIVSRLNAAAETANRAIEQYRYHELAQELWKFFWHEFCDWYLELKKVSATGWGNAVAAFETALRLLHPAMPFLTEELWQRLERKEGDPKSIALAQYPQYRAELADSEAEKEVAIIQEIVTLARTLRTESKLDPKQQLKGALYCRTASLAIAQRHADAIQKIARTTLEFKAEAPPKADVIRSTVEFDLVLDVPKVEEDPARKQKEREQLEKNIANSKRQLGDEVFLSKAPAKVVDSIRAKLVDYEAQLAKML</sequence>
<keyword id="KW-0030">Aminoacyl-tRNA synthetase</keyword>
<keyword id="KW-0067">ATP-binding</keyword>
<keyword id="KW-0175">Coiled coil</keyword>
<keyword id="KW-0963">Cytoplasm</keyword>
<keyword id="KW-0436">Ligase</keyword>
<keyword id="KW-0547">Nucleotide-binding</keyword>
<keyword id="KW-0648">Protein biosynthesis</keyword>
<proteinExistence type="inferred from homology"/>